<gene>
    <name evidence="1" type="primary">eno</name>
    <name type="ordered locus">lin2549</name>
</gene>
<keyword id="KW-0963">Cytoplasm</keyword>
<keyword id="KW-0324">Glycolysis</keyword>
<keyword id="KW-0456">Lyase</keyword>
<keyword id="KW-0460">Magnesium</keyword>
<keyword id="KW-0479">Metal-binding</keyword>
<keyword id="KW-0964">Secreted</keyword>
<feature type="chain" id="PRO_0000133914" description="Enolase">
    <location>
        <begin position="1"/>
        <end position="430"/>
    </location>
</feature>
<feature type="active site" description="Proton donor" evidence="1">
    <location>
        <position position="205"/>
    </location>
</feature>
<feature type="active site" description="Proton acceptor" evidence="1">
    <location>
        <position position="339"/>
    </location>
</feature>
<feature type="binding site" evidence="1">
    <location>
        <position position="163"/>
    </location>
    <ligand>
        <name>(2R)-2-phosphoglycerate</name>
        <dbReference type="ChEBI" id="CHEBI:58289"/>
    </ligand>
</feature>
<feature type="binding site" evidence="1">
    <location>
        <position position="242"/>
    </location>
    <ligand>
        <name>Mg(2+)</name>
        <dbReference type="ChEBI" id="CHEBI:18420"/>
    </ligand>
</feature>
<feature type="binding site" evidence="1">
    <location>
        <position position="287"/>
    </location>
    <ligand>
        <name>Mg(2+)</name>
        <dbReference type="ChEBI" id="CHEBI:18420"/>
    </ligand>
</feature>
<feature type="binding site" evidence="1">
    <location>
        <position position="314"/>
    </location>
    <ligand>
        <name>Mg(2+)</name>
        <dbReference type="ChEBI" id="CHEBI:18420"/>
    </ligand>
</feature>
<feature type="binding site" evidence="1">
    <location>
        <position position="339"/>
    </location>
    <ligand>
        <name>(2R)-2-phosphoglycerate</name>
        <dbReference type="ChEBI" id="CHEBI:58289"/>
    </ligand>
</feature>
<feature type="binding site" evidence="1">
    <location>
        <position position="368"/>
    </location>
    <ligand>
        <name>(2R)-2-phosphoglycerate</name>
        <dbReference type="ChEBI" id="CHEBI:58289"/>
    </ligand>
</feature>
<feature type="binding site" evidence="1">
    <location>
        <position position="369"/>
    </location>
    <ligand>
        <name>(2R)-2-phosphoglycerate</name>
        <dbReference type="ChEBI" id="CHEBI:58289"/>
    </ligand>
</feature>
<feature type="binding site" evidence="1">
    <location>
        <position position="390"/>
    </location>
    <ligand>
        <name>(2R)-2-phosphoglycerate</name>
        <dbReference type="ChEBI" id="CHEBI:58289"/>
    </ligand>
</feature>
<proteinExistence type="inferred from homology"/>
<reference key="1">
    <citation type="journal article" date="2001" name="Science">
        <title>Comparative genomics of Listeria species.</title>
        <authorList>
            <person name="Glaser P."/>
            <person name="Frangeul L."/>
            <person name="Buchrieser C."/>
            <person name="Rusniok C."/>
            <person name="Amend A."/>
            <person name="Baquero F."/>
            <person name="Berche P."/>
            <person name="Bloecker H."/>
            <person name="Brandt P."/>
            <person name="Chakraborty T."/>
            <person name="Charbit A."/>
            <person name="Chetouani F."/>
            <person name="Couve E."/>
            <person name="de Daruvar A."/>
            <person name="Dehoux P."/>
            <person name="Domann E."/>
            <person name="Dominguez-Bernal G."/>
            <person name="Duchaud E."/>
            <person name="Durant L."/>
            <person name="Dussurget O."/>
            <person name="Entian K.-D."/>
            <person name="Fsihi H."/>
            <person name="Garcia-del Portillo F."/>
            <person name="Garrido P."/>
            <person name="Gautier L."/>
            <person name="Goebel W."/>
            <person name="Gomez-Lopez N."/>
            <person name="Hain T."/>
            <person name="Hauf J."/>
            <person name="Jackson D."/>
            <person name="Jones L.-M."/>
            <person name="Kaerst U."/>
            <person name="Kreft J."/>
            <person name="Kuhn M."/>
            <person name="Kunst F."/>
            <person name="Kurapkat G."/>
            <person name="Madueno E."/>
            <person name="Maitournam A."/>
            <person name="Mata Vicente J."/>
            <person name="Ng E."/>
            <person name="Nedjari H."/>
            <person name="Nordsiek G."/>
            <person name="Novella S."/>
            <person name="de Pablos B."/>
            <person name="Perez-Diaz J.-C."/>
            <person name="Purcell R."/>
            <person name="Remmel B."/>
            <person name="Rose M."/>
            <person name="Schlueter T."/>
            <person name="Simoes N."/>
            <person name="Tierrez A."/>
            <person name="Vazquez-Boland J.-A."/>
            <person name="Voss H."/>
            <person name="Wehland J."/>
            <person name="Cossart P."/>
        </authorList>
    </citation>
    <scope>NUCLEOTIDE SEQUENCE [LARGE SCALE GENOMIC DNA]</scope>
    <source>
        <strain>ATCC BAA-680 / CLIP 11262</strain>
    </source>
</reference>
<comment type="function">
    <text evidence="1">Catalyzes the reversible conversion of 2-phosphoglycerate (2-PG) into phosphoenolpyruvate (PEP). It is essential for the degradation of carbohydrates via glycolysis.</text>
</comment>
<comment type="catalytic activity">
    <reaction evidence="1">
        <text>(2R)-2-phosphoglycerate = phosphoenolpyruvate + H2O</text>
        <dbReference type="Rhea" id="RHEA:10164"/>
        <dbReference type="ChEBI" id="CHEBI:15377"/>
        <dbReference type="ChEBI" id="CHEBI:58289"/>
        <dbReference type="ChEBI" id="CHEBI:58702"/>
        <dbReference type="EC" id="4.2.1.11"/>
    </reaction>
</comment>
<comment type="cofactor">
    <cofactor evidence="1">
        <name>Mg(2+)</name>
        <dbReference type="ChEBI" id="CHEBI:18420"/>
    </cofactor>
    <text evidence="1">Binds a second Mg(2+) ion via substrate during catalysis.</text>
</comment>
<comment type="pathway">
    <text evidence="1">Carbohydrate degradation; glycolysis; pyruvate from D-glyceraldehyde 3-phosphate: step 4/5.</text>
</comment>
<comment type="subcellular location">
    <subcellularLocation>
        <location evidence="1">Cytoplasm</location>
    </subcellularLocation>
    <subcellularLocation>
        <location evidence="1">Secreted</location>
    </subcellularLocation>
    <subcellularLocation>
        <location evidence="1">Cell surface</location>
    </subcellularLocation>
    <text evidence="1">Fractions of enolase are present in both the cytoplasm and on the cell surface.</text>
</comment>
<comment type="similarity">
    <text evidence="1">Belongs to the enolase family.</text>
</comment>
<evidence type="ECO:0000255" key="1">
    <source>
        <dbReference type="HAMAP-Rule" id="MF_00318"/>
    </source>
</evidence>
<dbReference type="EC" id="4.2.1.11" evidence="1"/>
<dbReference type="EMBL" id="AL596172">
    <property type="protein sequence ID" value="CAC97776.1"/>
    <property type="molecule type" value="Genomic_DNA"/>
</dbReference>
<dbReference type="PIR" id="AH1750">
    <property type="entry name" value="AH1750"/>
</dbReference>
<dbReference type="RefSeq" id="WP_003727923.1">
    <property type="nucleotide sequence ID" value="NC_003212.1"/>
</dbReference>
<dbReference type="SMR" id="P64075"/>
<dbReference type="STRING" id="272626.gene:17566929"/>
<dbReference type="GeneID" id="93235861"/>
<dbReference type="KEGG" id="lin:eno"/>
<dbReference type="eggNOG" id="COG0148">
    <property type="taxonomic scope" value="Bacteria"/>
</dbReference>
<dbReference type="HOGENOM" id="CLU_031223_2_1_9"/>
<dbReference type="OrthoDB" id="9804716at2"/>
<dbReference type="UniPathway" id="UPA00109">
    <property type="reaction ID" value="UER00187"/>
</dbReference>
<dbReference type="Proteomes" id="UP000002513">
    <property type="component" value="Chromosome"/>
</dbReference>
<dbReference type="GO" id="GO:0009986">
    <property type="term" value="C:cell surface"/>
    <property type="evidence" value="ECO:0007669"/>
    <property type="project" value="UniProtKB-SubCell"/>
</dbReference>
<dbReference type="GO" id="GO:0005576">
    <property type="term" value="C:extracellular region"/>
    <property type="evidence" value="ECO:0007669"/>
    <property type="project" value="UniProtKB-SubCell"/>
</dbReference>
<dbReference type="GO" id="GO:0000015">
    <property type="term" value="C:phosphopyruvate hydratase complex"/>
    <property type="evidence" value="ECO:0007669"/>
    <property type="project" value="InterPro"/>
</dbReference>
<dbReference type="GO" id="GO:0000287">
    <property type="term" value="F:magnesium ion binding"/>
    <property type="evidence" value="ECO:0007669"/>
    <property type="project" value="UniProtKB-UniRule"/>
</dbReference>
<dbReference type="GO" id="GO:0004634">
    <property type="term" value="F:phosphopyruvate hydratase activity"/>
    <property type="evidence" value="ECO:0007669"/>
    <property type="project" value="UniProtKB-UniRule"/>
</dbReference>
<dbReference type="GO" id="GO:0006096">
    <property type="term" value="P:glycolytic process"/>
    <property type="evidence" value="ECO:0007669"/>
    <property type="project" value="UniProtKB-UniRule"/>
</dbReference>
<dbReference type="CDD" id="cd03313">
    <property type="entry name" value="enolase"/>
    <property type="match status" value="1"/>
</dbReference>
<dbReference type="FunFam" id="3.20.20.120:FF:000001">
    <property type="entry name" value="Enolase"/>
    <property type="match status" value="1"/>
</dbReference>
<dbReference type="FunFam" id="3.30.390.10:FF:000001">
    <property type="entry name" value="Enolase"/>
    <property type="match status" value="1"/>
</dbReference>
<dbReference type="Gene3D" id="3.20.20.120">
    <property type="entry name" value="Enolase-like C-terminal domain"/>
    <property type="match status" value="1"/>
</dbReference>
<dbReference type="Gene3D" id="3.30.390.10">
    <property type="entry name" value="Enolase-like, N-terminal domain"/>
    <property type="match status" value="1"/>
</dbReference>
<dbReference type="HAMAP" id="MF_00318">
    <property type="entry name" value="Enolase"/>
    <property type="match status" value="1"/>
</dbReference>
<dbReference type="InterPro" id="IPR000941">
    <property type="entry name" value="Enolase"/>
</dbReference>
<dbReference type="InterPro" id="IPR036849">
    <property type="entry name" value="Enolase-like_C_sf"/>
</dbReference>
<dbReference type="InterPro" id="IPR029017">
    <property type="entry name" value="Enolase-like_N"/>
</dbReference>
<dbReference type="InterPro" id="IPR020810">
    <property type="entry name" value="Enolase_C"/>
</dbReference>
<dbReference type="InterPro" id="IPR020809">
    <property type="entry name" value="Enolase_CS"/>
</dbReference>
<dbReference type="InterPro" id="IPR020811">
    <property type="entry name" value="Enolase_N"/>
</dbReference>
<dbReference type="NCBIfam" id="TIGR01060">
    <property type="entry name" value="eno"/>
    <property type="match status" value="1"/>
</dbReference>
<dbReference type="PANTHER" id="PTHR11902">
    <property type="entry name" value="ENOLASE"/>
    <property type="match status" value="1"/>
</dbReference>
<dbReference type="PANTHER" id="PTHR11902:SF1">
    <property type="entry name" value="ENOLASE"/>
    <property type="match status" value="1"/>
</dbReference>
<dbReference type="Pfam" id="PF00113">
    <property type="entry name" value="Enolase_C"/>
    <property type="match status" value="1"/>
</dbReference>
<dbReference type="Pfam" id="PF03952">
    <property type="entry name" value="Enolase_N"/>
    <property type="match status" value="1"/>
</dbReference>
<dbReference type="PIRSF" id="PIRSF001400">
    <property type="entry name" value="Enolase"/>
    <property type="match status" value="1"/>
</dbReference>
<dbReference type="PRINTS" id="PR00148">
    <property type="entry name" value="ENOLASE"/>
</dbReference>
<dbReference type="SFLD" id="SFLDF00002">
    <property type="entry name" value="enolase"/>
    <property type="match status" value="1"/>
</dbReference>
<dbReference type="SFLD" id="SFLDG00178">
    <property type="entry name" value="enolase"/>
    <property type="match status" value="1"/>
</dbReference>
<dbReference type="SMART" id="SM01192">
    <property type="entry name" value="Enolase_C"/>
    <property type="match status" value="1"/>
</dbReference>
<dbReference type="SMART" id="SM01193">
    <property type="entry name" value="Enolase_N"/>
    <property type="match status" value="1"/>
</dbReference>
<dbReference type="SUPFAM" id="SSF51604">
    <property type="entry name" value="Enolase C-terminal domain-like"/>
    <property type="match status" value="1"/>
</dbReference>
<dbReference type="SUPFAM" id="SSF54826">
    <property type="entry name" value="Enolase N-terminal domain-like"/>
    <property type="match status" value="1"/>
</dbReference>
<dbReference type="PROSITE" id="PS00164">
    <property type="entry name" value="ENOLASE"/>
    <property type="match status" value="1"/>
</dbReference>
<accession>P64075</accession>
<accession>Q928I3</accession>
<sequence length="430" mass="46472">MSIITEVYAREVLDSRGNPTVEVEVYTEAGAFGRALVPSGASTGEYEAVELRDGDKARYLGKGVLKAVENVNDIIADKIIGFDVTDQIGIDKAMIELDGTPNKGKLGANAILGVSLAAARAAADELGVHLYEYLGGVNGKVLPVPMMNILNGGEHADNNVDVQEFMVMPVGAPNFKEALRMGAEILHALKAVLKGKGLNTGVGDEGGFAPNLKSNEEALETIMQAIKDAGYKPGEEVKLAMDAASSEFYNRETGKYELKGEGVTRTSEEMVTWYEEMITKYPIISIEDGLDENDWDGFKLLTERIGDRVQLVGDDLFVTNTTKLKEGIEKGIANSILIKVNQIGTLTETLDAIEMAKRAGYTAVISHRSGETEDSTIADIAVATNAGQIKTGAPTRTDRVAKYNQLLRIEDNLADLAEYHGNDTFYNLKK</sequence>
<name>ENO_LISIN</name>
<organism>
    <name type="scientific">Listeria innocua serovar 6a (strain ATCC BAA-680 / CLIP 11262)</name>
    <dbReference type="NCBI Taxonomy" id="272626"/>
    <lineage>
        <taxon>Bacteria</taxon>
        <taxon>Bacillati</taxon>
        <taxon>Bacillota</taxon>
        <taxon>Bacilli</taxon>
        <taxon>Bacillales</taxon>
        <taxon>Listeriaceae</taxon>
        <taxon>Listeria</taxon>
    </lineage>
</organism>
<protein>
    <recommendedName>
        <fullName evidence="1">Enolase</fullName>
        <ecNumber evidence="1">4.2.1.11</ecNumber>
    </recommendedName>
    <alternativeName>
        <fullName evidence="1">2-phospho-D-glycerate hydro-lyase</fullName>
    </alternativeName>
    <alternativeName>
        <fullName evidence="1">2-phosphoglycerate dehydratase</fullName>
    </alternativeName>
</protein>